<name>RL17_CUPTR</name>
<protein>
    <recommendedName>
        <fullName evidence="1">Large ribosomal subunit protein bL17</fullName>
    </recommendedName>
    <alternativeName>
        <fullName evidence="2">50S ribosomal protein L17</fullName>
    </alternativeName>
</protein>
<sequence length="131" mass="15050">MRHRHGLRKLNRTSSHRLAMLRNMSNSLFQHELIKTTVPKAKELRKVVEPLITLAKKDTVANRRLAFARLRDRDMVTKLFTELGPRYATRPGGYTRILKFGFRQGDNAPMALVELVDRPEITEAPAEEAAE</sequence>
<comment type="subunit">
    <text evidence="1">Part of the 50S ribosomal subunit. Contacts protein L32.</text>
</comment>
<comment type="similarity">
    <text evidence="1">Belongs to the bacterial ribosomal protein bL17 family.</text>
</comment>
<gene>
    <name evidence="1" type="primary">rplQ</name>
    <name type="ordered locus">RALTA_A2917</name>
</gene>
<proteinExistence type="inferred from homology"/>
<keyword id="KW-0687">Ribonucleoprotein</keyword>
<keyword id="KW-0689">Ribosomal protein</keyword>
<evidence type="ECO:0000255" key="1">
    <source>
        <dbReference type="HAMAP-Rule" id="MF_01368"/>
    </source>
</evidence>
<evidence type="ECO:0000305" key="2"/>
<reference key="1">
    <citation type="journal article" date="2008" name="Genome Res.">
        <title>Genome sequence of the beta-rhizobium Cupriavidus taiwanensis and comparative genomics of rhizobia.</title>
        <authorList>
            <person name="Amadou C."/>
            <person name="Pascal G."/>
            <person name="Mangenot S."/>
            <person name="Glew M."/>
            <person name="Bontemps C."/>
            <person name="Capela D."/>
            <person name="Carrere S."/>
            <person name="Cruveiller S."/>
            <person name="Dossat C."/>
            <person name="Lajus A."/>
            <person name="Marchetti M."/>
            <person name="Poinsot V."/>
            <person name="Rouy Z."/>
            <person name="Servin B."/>
            <person name="Saad M."/>
            <person name="Schenowitz C."/>
            <person name="Barbe V."/>
            <person name="Batut J."/>
            <person name="Medigue C."/>
            <person name="Masson-Boivin C."/>
        </authorList>
    </citation>
    <scope>NUCLEOTIDE SEQUENCE [LARGE SCALE GENOMIC DNA]</scope>
    <source>
        <strain>DSM 17343 / BCRC 17206 / CCUG 44338 / CIP 107171 / LMG 19424 / R1</strain>
    </source>
</reference>
<feature type="chain" id="PRO_1000144408" description="Large ribosomal subunit protein bL17">
    <location>
        <begin position="1"/>
        <end position="131"/>
    </location>
</feature>
<dbReference type="EMBL" id="CU633749">
    <property type="protein sequence ID" value="CAQ70842.1"/>
    <property type="molecule type" value="Genomic_DNA"/>
</dbReference>
<dbReference type="RefSeq" id="WP_010812373.1">
    <property type="nucleotide sequence ID" value="NC_010528.1"/>
</dbReference>
<dbReference type="SMR" id="B3R7E2"/>
<dbReference type="GeneID" id="34310227"/>
<dbReference type="KEGG" id="cti:RALTA_A2917"/>
<dbReference type="eggNOG" id="COG0203">
    <property type="taxonomic scope" value="Bacteria"/>
</dbReference>
<dbReference type="HOGENOM" id="CLU_074407_2_0_4"/>
<dbReference type="BioCyc" id="CTAI977880:RALTA_RS14220-MONOMER"/>
<dbReference type="Proteomes" id="UP000001692">
    <property type="component" value="Chromosome 1"/>
</dbReference>
<dbReference type="GO" id="GO:0022625">
    <property type="term" value="C:cytosolic large ribosomal subunit"/>
    <property type="evidence" value="ECO:0007669"/>
    <property type="project" value="TreeGrafter"/>
</dbReference>
<dbReference type="GO" id="GO:0003735">
    <property type="term" value="F:structural constituent of ribosome"/>
    <property type="evidence" value="ECO:0007669"/>
    <property type="project" value="InterPro"/>
</dbReference>
<dbReference type="GO" id="GO:0006412">
    <property type="term" value="P:translation"/>
    <property type="evidence" value="ECO:0007669"/>
    <property type="project" value="UniProtKB-UniRule"/>
</dbReference>
<dbReference type="FunFam" id="3.90.1030.10:FF:000001">
    <property type="entry name" value="50S ribosomal protein L17"/>
    <property type="match status" value="1"/>
</dbReference>
<dbReference type="Gene3D" id="3.90.1030.10">
    <property type="entry name" value="Ribosomal protein L17"/>
    <property type="match status" value="1"/>
</dbReference>
<dbReference type="HAMAP" id="MF_01368">
    <property type="entry name" value="Ribosomal_bL17"/>
    <property type="match status" value="1"/>
</dbReference>
<dbReference type="InterPro" id="IPR000456">
    <property type="entry name" value="Ribosomal_bL17"/>
</dbReference>
<dbReference type="InterPro" id="IPR047859">
    <property type="entry name" value="Ribosomal_bL17_CS"/>
</dbReference>
<dbReference type="InterPro" id="IPR036373">
    <property type="entry name" value="Ribosomal_bL17_sf"/>
</dbReference>
<dbReference type="NCBIfam" id="TIGR00059">
    <property type="entry name" value="L17"/>
    <property type="match status" value="1"/>
</dbReference>
<dbReference type="PANTHER" id="PTHR14413:SF16">
    <property type="entry name" value="LARGE RIBOSOMAL SUBUNIT PROTEIN BL17M"/>
    <property type="match status" value="1"/>
</dbReference>
<dbReference type="PANTHER" id="PTHR14413">
    <property type="entry name" value="RIBOSOMAL PROTEIN L17"/>
    <property type="match status" value="1"/>
</dbReference>
<dbReference type="Pfam" id="PF01196">
    <property type="entry name" value="Ribosomal_L17"/>
    <property type="match status" value="1"/>
</dbReference>
<dbReference type="SUPFAM" id="SSF64263">
    <property type="entry name" value="Prokaryotic ribosomal protein L17"/>
    <property type="match status" value="1"/>
</dbReference>
<dbReference type="PROSITE" id="PS01167">
    <property type="entry name" value="RIBOSOMAL_L17"/>
    <property type="match status" value="1"/>
</dbReference>
<organism>
    <name type="scientific">Cupriavidus taiwanensis (strain DSM 17343 / BCRC 17206 / CCUG 44338 / CIP 107171 / LMG 19424 / R1)</name>
    <name type="common">Ralstonia taiwanensis (strain LMG 19424)</name>
    <dbReference type="NCBI Taxonomy" id="977880"/>
    <lineage>
        <taxon>Bacteria</taxon>
        <taxon>Pseudomonadati</taxon>
        <taxon>Pseudomonadota</taxon>
        <taxon>Betaproteobacteria</taxon>
        <taxon>Burkholderiales</taxon>
        <taxon>Burkholderiaceae</taxon>
        <taxon>Cupriavidus</taxon>
    </lineage>
</organism>
<accession>B3R7E2</accession>